<evidence type="ECO:0000255" key="1">
    <source>
        <dbReference type="HAMAP-Rule" id="MF_01694"/>
    </source>
</evidence>
<evidence type="ECO:0000255" key="2">
    <source>
        <dbReference type="PROSITE-ProRule" id="PRU01266"/>
    </source>
</evidence>
<name>BIOB_HAEIE</name>
<accession>A5UD65</accession>
<proteinExistence type="inferred from homology"/>
<comment type="function">
    <text evidence="1">Catalyzes the conversion of dethiobiotin (DTB) to biotin by the insertion of a sulfur atom into dethiobiotin via a radical-based mechanism.</text>
</comment>
<comment type="catalytic activity">
    <reaction evidence="1">
        <text>(4R,5S)-dethiobiotin + (sulfur carrier)-SH + 2 reduced [2Fe-2S]-[ferredoxin] + 2 S-adenosyl-L-methionine = (sulfur carrier)-H + biotin + 2 5'-deoxyadenosine + 2 L-methionine + 2 oxidized [2Fe-2S]-[ferredoxin]</text>
        <dbReference type="Rhea" id="RHEA:22060"/>
        <dbReference type="Rhea" id="RHEA-COMP:10000"/>
        <dbReference type="Rhea" id="RHEA-COMP:10001"/>
        <dbReference type="Rhea" id="RHEA-COMP:14737"/>
        <dbReference type="Rhea" id="RHEA-COMP:14739"/>
        <dbReference type="ChEBI" id="CHEBI:17319"/>
        <dbReference type="ChEBI" id="CHEBI:29917"/>
        <dbReference type="ChEBI" id="CHEBI:33737"/>
        <dbReference type="ChEBI" id="CHEBI:33738"/>
        <dbReference type="ChEBI" id="CHEBI:57586"/>
        <dbReference type="ChEBI" id="CHEBI:57844"/>
        <dbReference type="ChEBI" id="CHEBI:59789"/>
        <dbReference type="ChEBI" id="CHEBI:64428"/>
        <dbReference type="ChEBI" id="CHEBI:149473"/>
        <dbReference type="EC" id="2.8.1.6"/>
    </reaction>
</comment>
<comment type="cofactor">
    <cofactor evidence="1">
        <name>[4Fe-4S] cluster</name>
        <dbReference type="ChEBI" id="CHEBI:49883"/>
    </cofactor>
    <text evidence="1">Binds 1 [4Fe-4S] cluster. The cluster is coordinated with 3 cysteines and an exchangeable S-adenosyl-L-methionine.</text>
</comment>
<comment type="cofactor">
    <cofactor evidence="1">
        <name>[2Fe-2S] cluster</name>
        <dbReference type="ChEBI" id="CHEBI:190135"/>
    </cofactor>
    <text evidence="1">Binds 1 [2Fe-2S] cluster. The cluster is coordinated with 3 cysteines and 1 arginine.</text>
</comment>
<comment type="pathway">
    <text evidence="1">Cofactor biosynthesis; biotin biosynthesis; biotin from 7,8-diaminononanoate: step 2/2.</text>
</comment>
<comment type="subunit">
    <text evidence="1">Homodimer.</text>
</comment>
<comment type="similarity">
    <text evidence="1">Belongs to the radical SAM superfamily. Biotin synthase family.</text>
</comment>
<sequence length="333" mass="36785">MLAEKLQINSITPHPSVEYWSVCKVEALFETPFLELVYRATQVHRKHFNPRAIQLSTLMSIKTGGCPEDCSYCPQSARYHTGVQNQQLLDVDEIVAKAKIAKARGAGRFCMGAAWRGPKPKDIEKVTEIIKAVKSLGLETCGTFGLLQDGMAEDLKEAGLDYYNHNLDTAPEHYAEVIGTRRFDDRLSTLGKVRKAGLKVCCGGIVGMNETRKERAGLIASLANLDPQPESVPINQLVKVEGTPLADAEELDWTEFVRTIAVARITMPKSYVRLSAGRSGMTEEMQAMCFMAGANSIFYGDKLLVTDNPEEDGDQLLMAKLDLEPETAENKKL</sequence>
<protein>
    <recommendedName>
        <fullName evidence="1">Biotin synthase</fullName>
        <ecNumber evidence="1">2.8.1.6</ecNumber>
    </recommendedName>
</protein>
<gene>
    <name evidence="1" type="primary">bioB</name>
    <name type="ordered locus">CGSHiEE_06905</name>
</gene>
<feature type="chain" id="PRO_0000381415" description="Biotin synthase">
    <location>
        <begin position="1"/>
        <end position="333"/>
    </location>
</feature>
<feature type="domain" description="Radical SAM core" evidence="2">
    <location>
        <begin position="51"/>
        <end position="278"/>
    </location>
</feature>
<feature type="binding site" evidence="1">
    <location>
        <position position="66"/>
    </location>
    <ligand>
        <name>[4Fe-4S] cluster</name>
        <dbReference type="ChEBI" id="CHEBI:49883"/>
        <note>4Fe-4S-S-AdoMet</note>
    </ligand>
</feature>
<feature type="binding site" evidence="1">
    <location>
        <position position="70"/>
    </location>
    <ligand>
        <name>[4Fe-4S] cluster</name>
        <dbReference type="ChEBI" id="CHEBI:49883"/>
        <note>4Fe-4S-S-AdoMet</note>
    </ligand>
</feature>
<feature type="binding site" evidence="1">
    <location>
        <position position="73"/>
    </location>
    <ligand>
        <name>[4Fe-4S] cluster</name>
        <dbReference type="ChEBI" id="CHEBI:49883"/>
        <note>4Fe-4S-S-AdoMet</note>
    </ligand>
</feature>
<feature type="binding site" evidence="1">
    <location>
        <position position="110"/>
    </location>
    <ligand>
        <name>[2Fe-2S] cluster</name>
        <dbReference type="ChEBI" id="CHEBI:190135"/>
    </ligand>
</feature>
<feature type="binding site" evidence="1">
    <location>
        <position position="141"/>
    </location>
    <ligand>
        <name>[2Fe-2S] cluster</name>
        <dbReference type="ChEBI" id="CHEBI:190135"/>
    </ligand>
</feature>
<feature type="binding site" evidence="1">
    <location>
        <position position="201"/>
    </location>
    <ligand>
        <name>[2Fe-2S] cluster</name>
        <dbReference type="ChEBI" id="CHEBI:190135"/>
    </ligand>
</feature>
<feature type="binding site" evidence="1">
    <location>
        <position position="273"/>
    </location>
    <ligand>
        <name>[2Fe-2S] cluster</name>
        <dbReference type="ChEBI" id="CHEBI:190135"/>
    </ligand>
</feature>
<keyword id="KW-0001">2Fe-2S</keyword>
<keyword id="KW-0004">4Fe-4S</keyword>
<keyword id="KW-0093">Biotin biosynthesis</keyword>
<keyword id="KW-0408">Iron</keyword>
<keyword id="KW-0411">Iron-sulfur</keyword>
<keyword id="KW-0479">Metal-binding</keyword>
<keyword id="KW-0949">S-adenosyl-L-methionine</keyword>
<keyword id="KW-0808">Transferase</keyword>
<reference key="1">
    <citation type="journal article" date="2007" name="Genome Biol.">
        <title>Characterization and modeling of the Haemophilus influenzae core and supragenomes based on the complete genomic sequences of Rd and 12 clinical nontypeable strains.</title>
        <authorList>
            <person name="Hogg J.S."/>
            <person name="Hu F.Z."/>
            <person name="Janto B."/>
            <person name="Boissy R."/>
            <person name="Hayes J."/>
            <person name="Keefe R."/>
            <person name="Post J.C."/>
            <person name="Ehrlich G.D."/>
        </authorList>
    </citation>
    <scope>NUCLEOTIDE SEQUENCE [LARGE SCALE GENOMIC DNA]</scope>
    <source>
        <strain>PittEE</strain>
    </source>
</reference>
<dbReference type="EC" id="2.8.1.6" evidence="1"/>
<dbReference type="EMBL" id="CP000671">
    <property type="protein sequence ID" value="ABQ98716.1"/>
    <property type="molecule type" value="Genomic_DNA"/>
</dbReference>
<dbReference type="SMR" id="A5UD65"/>
<dbReference type="KEGG" id="hip:CGSHiEE_06905"/>
<dbReference type="HOGENOM" id="CLU_033172_1_2_6"/>
<dbReference type="UniPathway" id="UPA00078">
    <property type="reaction ID" value="UER00162"/>
</dbReference>
<dbReference type="GO" id="GO:0051537">
    <property type="term" value="F:2 iron, 2 sulfur cluster binding"/>
    <property type="evidence" value="ECO:0007669"/>
    <property type="project" value="UniProtKB-KW"/>
</dbReference>
<dbReference type="GO" id="GO:0051539">
    <property type="term" value="F:4 iron, 4 sulfur cluster binding"/>
    <property type="evidence" value="ECO:0007669"/>
    <property type="project" value="UniProtKB-KW"/>
</dbReference>
<dbReference type="GO" id="GO:0004076">
    <property type="term" value="F:biotin synthase activity"/>
    <property type="evidence" value="ECO:0007669"/>
    <property type="project" value="UniProtKB-UniRule"/>
</dbReference>
<dbReference type="GO" id="GO:0005506">
    <property type="term" value="F:iron ion binding"/>
    <property type="evidence" value="ECO:0007669"/>
    <property type="project" value="UniProtKB-UniRule"/>
</dbReference>
<dbReference type="GO" id="GO:0009102">
    <property type="term" value="P:biotin biosynthetic process"/>
    <property type="evidence" value="ECO:0007669"/>
    <property type="project" value="UniProtKB-UniRule"/>
</dbReference>
<dbReference type="CDD" id="cd01335">
    <property type="entry name" value="Radical_SAM"/>
    <property type="match status" value="1"/>
</dbReference>
<dbReference type="FunFam" id="3.20.20.70:FF:000011">
    <property type="entry name" value="Biotin synthase"/>
    <property type="match status" value="1"/>
</dbReference>
<dbReference type="Gene3D" id="3.20.20.70">
    <property type="entry name" value="Aldolase class I"/>
    <property type="match status" value="1"/>
</dbReference>
<dbReference type="HAMAP" id="MF_01694">
    <property type="entry name" value="BioB"/>
    <property type="match status" value="1"/>
</dbReference>
<dbReference type="InterPro" id="IPR013785">
    <property type="entry name" value="Aldolase_TIM"/>
</dbReference>
<dbReference type="InterPro" id="IPR010722">
    <property type="entry name" value="BATS_dom"/>
</dbReference>
<dbReference type="InterPro" id="IPR002684">
    <property type="entry name" value="Biotin_synth/BioAB"/>
</dbReference>
<dbReference type="InterPro" id="IPR024177">
    <property type="entry name" value="Biotin_synthase"/>
</dbReference>
<dbReference type="InterPro" id="IPR006638">
    <property type="entry name" value="Elp3/MiaA/NifB-like_rSAM"/>
</dbReference>
<dbReference type="InterPro" id="IPR007197">
    <property type="entry name" value="rSAM"/>
</dbReference>
<dbReference type="NCBIfam" id="TIGR00433">
    <property type="entry name" value="bioB"/>
    <property type="match status" value="1"/>
</dbReference>
<dbReference type="PANTHER" id="PTHR22976">
    <property type="entry name" value="BIOTIN SYNTHASE"/>
    <property type="match status" value="1"/>
</dbReference>
<dbReference type="PANTHER" id="PTHR22976:SF2">
    <property type="entry name" value="BIOTIN SYNTHASE, MITOCHONDRIAL"/>
    <property type="match status" value="1"/>
</dbReference>
<dbReference type="Pfam" id="PF06968">
    <property type="entry name" value="BATS"/>
    <property type="match status" value="1"/>
</dbReference>
<dbReference type="Pfam" id="PF04055">
    <property type="entry name" value="Radical_SAM"/>
    <property type="match status" value="1"/>
</dbReference>
<dbReference type="PIRSF" id="PIRSF001619">
    <property type="entry name" value="Biotin_synth"/>
    <property type="match status" value="1"/>
</dbReference>
<dbReference type="SFLD" id="SFLDF00272">
    <property type="entry name" value="biotin_synthase"/>
    <property type="match status" value="1"/>
</dbReference>
<dbReference type="SFLD" id="SFLDS00029">
    <property type="entry name" value="Radical_SAM"/>
    <property type="match status" value="1"/>
</dbReference>
<dbReference type="SMART" id="SM00876">
    <property type="entry name" value="BATS"/>
    <property type="match status" value="1"/>
</dbReference>
<dbReference type="SMART" id="SM00729">
    <property type="entry name" value="Elp3"/>
    <property type="match status" value="1"/>
</dbReference>
<dbReference type="SUPFAM" id="SSF102114">
    <property type="entry name" value="Radical SAM enzymes"/>
    <property type="match status" value="1"/>
</dbReference>
<dbReference type="PROSITE" id="PS51918">
    <property type="entry name" value="RADICAL_SAM"/>
    <property type="match status" value="1"/>
</dbReference>
<organism>
    <name type="scientific">Haemophilus influenzae (strain PittEE)</name>
    <dbReference type="NCBI Taxonomy" id="374930"/>
    <lineage>
        <taxon>Bacteria</taxon>
        <taxon>Pseudomonadati</taxon>
        <taxon>Pseudomonadota</taxon>
        <taxon>Gammaproteobacteria</taxon>
        <taxon>Pasteurellales</taxon>
        <taxon>Pasteurellaceae</taxon>
        <taxon>Haemophilus</taxon>
    </lineage>
</organism>